<sequence length="571" mass="64105">MLSLIMRTVIALSYIFCLAFGQGLPWNDNNTATLCLGHHAVPNGTIVKTITDDQIEVTNATELVQSSSTGKICNNPHRILDGGNCTLIDALLGDPHCNVFQYETWDLFVERTNAFSNCYPYDVPDYASLRSIVASSGTLEFFAESFTWTGVTQNGGSSACKRGTASSFFSRLNWLTKSGNAYPLLNVTMPNNDNFDKLYIWGVHHPSTNQEQTELYVQASGRVTVSTRKSQQTVIPNIGSRPWVRGQSGRVSIYWTIVKPGDVLVINSNGNLIAPRGYFKVRTGKSSIMRSDAPIDTCISECITPNGSIPNDKPFQNVNKITYGACPKYVKQNTLKLATGMRNVPEKQIRGIFGAIAGFIENGWEGMIDGWYGFRHQNSEGTGQAADLKSTQAALDQINGKLNRVIEKTNEKFHQIEKEFSEVEGRIQDLEKYVEDTKIDLWSYNAELLVALENQHTIDLTDSEMNKLFEKTRRQLRENAEDMGNGCFKIYHNCDNACIESIRNGTYDHNIYRDEALNNRFQIKGVELKSGYKDWILWISFAISCFLLCVVLLGFIMWACQKGNIRCNICF</sequence>
<keyword id="KW-0002">3D-structure</keyword>
<keyword id="KW-1167">Clathrin- and caveolin-independent endocytosis of virus by host</keyword>
<keyword id="KW-1165">Clathrin-mediated endocytosis of virus by host</keyword>
<keyword id="KW-1015">Disulfide bond</keyword>
<keyword id="KW-1170">Fusion of virus membrane with host endosomal membrane</keyword>
<keyword id="KW-1168">Fusion of virus membrane with host membrane</keyword>
<keyword id="KW-0325">Glycoprotein</keyword>
<keyword id="KW-0348">Hemagglutinin</keyword>
<keyword id="KW-1032">Host cell membrane</keyword>
<keyword id="KW-1043">Host membrane</keyword>
<keyword id="KW-0945">Host-virus interaction</keyword>
<keyword id="KW-0449">Lipoprotein</keyword>
<keyword id="KW-0472">Membrane</keyword>
<keyword id="KW-0564">Palmitate</keyword>
<keyword id="KW-0732">Signal</keyword>
<keyword id="KW-0812">Transmembrane</keyword>
<keyword id="KW-1133">Transmembrane helix</keyword>
<keyword id="KW-1161">Viral attachment to host cell</keyword>
<keyword id="KW-0261">Viral envelope protein</keyword>
<keyword id="KW-1162">Viral penetration into host cytoplasm</keyword>
<keyword id="KW-0946">Virion</keyword>
<keyword id="KW-1164">Virus endocytosis by host</keyword>
<keyword id="KW-1160">Virus entry into host cell</keyword>
<proteinExistence type="evidence at protein level"/>
<evidence type="ECO:0000255" key="1">
    <source>
        <dbReference type="HAMAP-Rule" id="MF_04072"/>
    </source>
</evidence>
<evidence type="ECO:0000305" key="2"/>
<feature type="signal peptide" evidence="1">
    <location>
        <begin position="1"/>
        <end position="21"/>
    </location>
</feature>
<feature type="chain" id="PRO_0000440532" description="Hemagglutinin" evidence="1">
    <location>
        <begin position="22"/>
        <end position="571"/>
    </location>
</feature>
<feature type="chain" id="PRO_0000280189" description="Hemagglutinin HA1 chain">
    <location>
        <begin position="22"/>
        <end position="349"/>
    </location>
</feature>
<feature type="chain" id="PRO_0000280190" description="Hemagglutinin HA2 chain" evidence="1">
    <location>
        <begin position="351"/>
        <end position="571"/>
    </location>
</feature>
<feature type="topological domain" description="Extracellular" evidence="1">
    <location>
        <begin position="22"/>
        <end position="535"/>
    </location>
</feature>
<feature type="transmembrane region" description="Helical" evidence="1">
    <location>
        <begin position="536"/>
        <end position="556"/>
    </location>
</feature>
<feature type="topological domain" description="Cytoplasmic" evidence="1">
    <location>
        <begin position="557"/>
        <end position="571"/>
    </location>
</feature>
<feature type="site" description="Cleavage; by host" evidence="1">
    <location>
        <begin position="350"/>
        <end position="351"/>
    </location>
</feature>
<feature type="lipid moiety-binding region" description="S-palmitoyl cysteine; by host" evidence="1">
    <location>
        <position position="560"/>
    </location>
</feature>
<feature type="lipid moiety-binding region" description="S-palmitoyl cysteine; by host" evidence="1">
    <location>
        <position position="567"/>
    </location>
</feature>
<feature type="lipid moiety-binding region" description="S-palmitoyl cysteine; by host" evidence="1">
    <location>
        <position position="570"/>
    </location>
</feature>
<feature type="glycosylation site" description="N-linked (GlcNAc...) asparagine; by host" evidence="1">
    <location>
        <position position="29"/>
    </location>
</feature>
<feature type="glycosylation site" description="N-linked (GlcNAc...) asparagine; by host" evidence="1">
    <location>
        <position position="43"/>
    </location>
</feature>
<feature type="glycosylation site" description="N-linked (GlcNAc...) asparagine; by host" evidence="1">
    <location>
        <position position="59"/>
    </location>
</feature>
<feature type="glycosylation site" description="N-linked (GlcNAc...) asparagine; by host" evidence="1">
    <location>
        <position position="84"/>
    </location>
</feature>
<feature type="glycosylation site" description="N-linked (GlcNAc...) asparagine; by host" evidence="1">
    <location>
        <position position="186"/>
    </location>
</feature>
<feature type="glycosylation site" description="N-linked (GlcNAc...) asparagine; by host" evidence="1">
    <location>
        <position position="306"/>
    </location>
</feature>
<feature type="glycosylation site" description="N-linked (GlcNAc...) asparagine; by host" evidence="1">
    <location>
        <position position="504"/>
    </location>
</feature>
<feature type="disulfide bond" description="Interchain (between HA1 and HA2 chains)" evidence="1">
    <location>
        <begin position="35"/>
        <end position="487"/>
    </location>
</feature>
<feature type="disulfide bond" evidence="1">
    <location>
        <begin position="73"/>
        <end position="298"/>
    </location>
</feature>
<feature type="disulfide bond" evidence="1">
    <location>
        <begin position="85"/>
        <end position="97"/>
    </location>
</feature>
<feature type="disulfide bond" evidence="1">
    <location>
        <begin position="118"/>
        <end position="160"/>
    </location>
</feature>
<feature type="disulfide bond" evidence="1">
    <location>
        <begin position="302"/>
        <end position="326"/>
    </location>
</feature>
<feature type="disulfide bond" evidence="1">
    <location>
        <begin position="494"/>
        <end position="498"/>
    </location>
</feature>
<dbReference type="EMBL" id="M65018">
    <property type="protein sequence ID" value="AAA43151.1"/>
    <property type="molecule type" value="Genomic_RNA"/>
</dbReference>
<dbReference type="PDB" id="1HXY">
    <property type="method" value="X-ray"/>
    <property type="resolution" value="2.60 A"/>
    <property type="chains" value="C=327-339"/>
</dbReference>
<dbReference type="PDB" id="2IPK">
    <property type="method" value="X-ray"/>
    <property type="resolution" value="2.30 A"/>
    <property type="chains" value="C=327-339"/>
</dbReference>
<dbReference type="PDB" id="2XN9">
    <property type="method" value="X-ray"/>
    <property type="resolution" value="2.30 A"/>
    <property type="chains" value="F=327-339"/>
</dbReference>
<dbReference type="PDB" id="8IB1">
    <property type="method" value="X-ray"/>
    <property type="resolution" value="1.95 A"/>
    <property type="chains" value="C=450-464"/>
</dbReference>
<dbReference type="PDBsum" id="1HXY"/>
<dbReference type="PDBsum" id="2IPK"/>
<dbReference type="PDBsum" id="2XN9"/>
<dbReference type="PDBsum" id="8IB1"/>
<dbReference type="SMR" id="Q03909"/>
<dbReference type="GlyCosmos" id="Q03909">
    <property type="glycosylation" value="7 sites, No reported glycans"/>
</dbReference>
<dbReference type="EvolutionaryTrace" id="Q03909"/>
<dbReference type="Proteomes" id="UP000130281">
    <property type="component" value="Genome"/>
</dbReference>
<dbReference type="GO" id="GO:0020002">
    <property type="term" value="C:host cell plasma membrane"/>
    <property type="evidence" value="ECO:0007669"/>
    <property type="project" value="UniProtKB-SubCell"/>
</dbReference>
<dbReference type="GO" id="GO:0016020">
    <property type="term" value="C:membrane"/>
    <property type="evidence" value="ECO:0007669"/>
    <property type="project" value="UniProtKB-UniRule"/>
</dbReference>
<dbReference type="GO" id="GO:0019031">
    <property type="term" value="C:viral envelope"/>
    <property type="evidence" value="ECO:0007669"/>
    <property type="project" value="UniProtKB-UniRule"/>
</dbReference>
<dbReference type="GO" id="GO:0055036">
    <property type="term" value="C:virion membrane"/>
    <property type="evidence" value="ECO:0007669"/>
    <property type="project" value="UniProtKB-SubCell"/>
</dbReference>
<dbReference type="GO" id="GO:0046789">
    <property type="term" value="F:host cell surface receptor binding"/>
    <property type="evidence" value="ECO:0007669"/>
    <property type="project" value="UniProtKB-UniRule"/>
</dbReference>
<dbReference type="GO" id="GO:0075512">
    <property type="term" value="P:clathrin-dependent endocytosis of virus by host cell"/>
    <property type="evidence" value="ECO:0007669"/>
    <property type="project" value="UniProtKB-UniRule"/>
</dbReference>
<dbReference type="GO" id="GO:0039654">
    <property type="term" value="P:fusion of virus membrane with host endosome membrane"/>
    <property type="evidence" value="ECO:0007669"/>
    <property type="project" value="UniProtKB-UniRule"/>
</dbReference>
<dbReference type="GO" id="GO:0019064">
    <property type="term" value="P:fusion of virus membrane with host plasma membrane"/>
    <property type="evidence" value="ECO:0007669"/>
    <property type="project" value="InterPro"/>
</dbReference>
<dbReference type="GO" id="GO:0046761">
    <property type="term" value="P:viral budding from plasma membrane"/>
    <property type="evidence" value="ECO:0007669"/>
    <property type="project" value="UniProtKB-UniRule"/>
</dbReference>
<dbReference type="GO" id="GO:0019062">
    <property type="term" value="P:virion attachment to host cell"/>
    <property type="evidence" value="ECO:0007669"/>
    <property type="project" value="UniProtKB-KW"/>
</dbReference>
<dbReference type="FunFam" id="3.90.20.10:FF:000001">
    <property type="entry name" value="Hemagglutinin"/>
    <property type="match status" value="1"/>
</dbReference>
<dbReference type="FunFam" id="3.90.209.20:FF:000001">
    <property type="entry name" value="Hemagglutinin"/>
    <property type="match status" value="1"/>
</dbReference>
<dbReference type="Gene3D" id="3.90.20.10">
    <property type="match status" value="1"/>
</dbReference>
<dbReference type="Gene3D" id="3.90.209.20">
    <property type="match status" value="1"/>
</dbReference>
<dbReference type="HAMAP" id="MF_04072">
    <property type="entry name" value="INFV_HEMA"/>
    <property type="match status" value="1"/>
</dbReference>
<dbReference type="InterPro" id="IPR008980">
    <property type="entry name" value="Capsid_hemagglutn"/>
</dbReference>
<dbReference type="InterPro" id="IPR013828">
    <property type="entry name" value="Hemagglutn_HA1_a/b_dom_sf"/>
</dbReference>
<dbReference type="InterPro" id="IPR000149">
    <property type="entry name" value="Hemagglutn_influenz_A"/>
</dbReference>
<dbReference type="InterPro" id="IPR001364">
    <property type="entry name" value="Hemagglutn_influenz_A/B"/>
</dbReference>
<dbReference type="Pfam" id="PF00509">
    <property type="entry name" value="Hemagglutinin"/>
    <property type="match status" value="1"/>
</dbReference>
<dbReference type="PRINTS" id="PR00330">
    <property type="entry name" value="HEMAGGLUTN1"/>
</dbReference>
<dbReference type="PRINTS" id="PR00329">
    <property type="entry name" value="HEMAGGLUTN12"/>
</dbReference>
<dbReference type="SUPFAM" id="SSF58064">
    <property type="entry name" value="Influenza hemagglutinin (stalk)"/>
    <property type="match status" value="1"/>
</dbReference>
<dbReference type="SUPFAM" id="SSF49818">
    <property type="entry name" value="Viral protein domain"/>
    <property type="match status" value="1"/>
</dbReference>
<organismHost>
    <name type="scientific">Aves</name>
    <dbReference type="NCBI Taxonomy" id="8782"/>
</organismHost>
<organismHost>
    <name type="scientific">Equus caballus</name>
    <name type="common">Horse</name>
    <dbReference type="NCBI Taxonomy" id="9796"/>
</organismHost>
<comment type="function">
    <text evidence="1">Binds to sialic acid-containing receptors on the cell surface, bringing about the attachment of the virus particle to the cell. This attachment induces virion internalization either through clathrin-dependent endocytosis or through clathrin- and caveolin-independent pathway. Plays a major role in the determination of host range restriction and virulence. Class I viral fusion protein. Responsible for penetration of the virus into the cell cytoplasm by mediating the fusion of the membrane of the endocytosed virus particle with the endosomal membrane. Low pH in endosomes induces an irreversible conformational change in HA2, releasing the fusion hydrophobic peptide. Several trimers are required to form a competent fusion pore.</text>
</comment>
<comment type="subunit">
    <text evidence="1">Homotrimer of disulfide-linked HA1-HA2.</text>
</comment>
<comment type="subcellular location">
    <subcellularLocation>
        <location evidence="1">Virion membrane</location>
        <topology evidence="1">Single-pass type I membrane protein</topology>
    </subcellularLocation>
    <subcellularLocation>
        <location evidence="1">Host apical cell membrane</location>
        <topology evidence="1">Single-pass type I membrane protein</topology>
    </subcellularLocation>
    <text evidence="1">Targeted to the apical plasma membrane in epithelial polarized cells through a signal present in the transmembrane domain. Associated with glycosphingolipid- and cholesterol-enriched detergent-resistant lipid rafts.</text>
</comment>
<comment type="PTM">
    <text evidence="1">Palmitoylated.</text>
</comment>
<comment type="PTM">
    <text evidence="1">In natural infection, inactive HA is matured into HA1 and HA2 outside the cell by one or more trypsin-like, arginine-specific endoprotease secreted by the bronchial epithelial cells. One identified protease that may be involved in this process is secreted in lungs by club cells.</text>
</comment>
<comment type="miscellaneous">
    <text>Major glycoprotein, comprises over 80% of the envelope proteins present in virus particle.</text>
</comment>
<comment type="miscellaneous">
    <text>The extent of infection into host organism is determined by HA. Influenza viruses bud from the apical surface of polarized epithelial cells (e.g. bronchial epithelial cells) into lumen of lungs and are therefore usually pneumotropic. The reason is that HA is cleaved by tryptase clara which is restricted to lungs. However, HAs of H5 and H7 pantropic avian viruses subtypes can be cleaved by furin and subtilisin-type enzymes, allowing the virus to grow in other organs than lungs.</text>
</comment>
<comment type="miscellaneous">
    <text evidence="2">The influenza A genome consist of 8 RNA segments. Genetic variation of hemagglutinin and/or neuraminidase genes results in the emergence of new influenza strains. The mechanism of variation can be the result of point mutations or the result of genetic reassortment between segments of two different strains.</text>
</comment>
<comment type="similarity">
    <text evidence="1">Belongs to the influenza viruses hemagglutinin family.</text>
</comment>
<gene>
    <name evidence="1" type="primary">HA</name>
</gene>
<organism>
    <name type="scientific">Influenza A virus (strain A/Equine/Jillin/1/1989 H3N8)</name>
    <dbReference type="NCBI Taxonomy" id="385585"/>
    <lineage>
        <taxon>Viruses</taxon>
        <taxon>Riboviria</taxon>
        <taxon>Orthornavirae</taxon>
        <taxon>Negarnaviricota</taxon>
        <taxon>Polyploviricotina</taxon>
        <taxon>Insthoviricetes</taxon>
        <taxon>Articulavirales</taxon>
        <taxon>Orthomyxoviridae</taxon>
        <taxon>Alphainfluenzavirus</taxon>
        <taxon>Alphainfluenzavirus influenzae</taxon>
        <taxon>Influenza A virus</taxon>
    </lineage>
</organism>
<reference key="1">
    <citation type="submission" date="1991-06" db="EMBL/GenBank/DDBJ databases">
        <title>Emergence of a new influenza A virus in horses from avian sources.</title>
        <authorList>
            <person name="Guo Y."/>
            <person name="Wang M.G."/>
            <person name="Kawaoka Y."/>
            <person name="Gorman O.T."/>
            <person name="Ito T."/>
            <person name="Webster R.G."/>
        </authorList>
    </citation>
    <scope>NUCLEOTIDE SEQUENCE [GENOMIC RNA]</scope>
</reference>
<accession>Q03909</accession>
<name>HEMA_I89A7</name>
<protein>
    <recommendedName>
        <fullName evidence="1">Hemagglutinin</fullName>
    </recommendedName>
    <component>
        <recommendedName>
            <fullName evidence="1">Hemagglutinin HA1 chain</fullName>
        </recommendedName>
    </component>
    <component>
        <recommendedName>
            <fullName evidence="1">Hemagglutinin HA2 chain</fullName>
        </recommendedName>
    </component>
</protein>